<accession>Q8VYX1</accession>
<evidence type="ECO:0000250" key="1">
    <source>
        <dbReference type="UniProtKB" id="Q22993"/>
    </source>
</evidence>
<evidence type="ECO:0000250" key="2">
    <source>
        <dbReference type="UniProtKB" id="Q9FR44"/>
    </source>
</evidence>
<evidence type="ECO:0000255" key="3">
    <source>
        <dbReference type="PROSITE-ProRule" id="PRU00915"/>
    </source>
</evidence>
<evidence type="ECO:0000269" key="4">
    <source>
    </source>
</evidence>
<evidence type="ECO:0000269" key="5">
    <source>
    </source>
</evidence>
<evidence type="ECO:0000303" key="6">
    <source>
    </source>
</evidence>
<evidence type="ECO:0000303" key="7">
    <source>
    </source>
</evidence>
<evidence type="ECO:0000305" key="8"/>
<feature type="chain" id="PRO_0000458647" description="Phosphoethanolamine N-methyltransferase 1">
    <location>
        <begin position="1"/>
        <end position="498"/>
    </location>
</feature>
<feature type="binding site" evidence="2">
    <location>
        <position position="68"/>
    </location>
    <ligand>
        <name>S-adenosyl-L-homocysteine</name>
        <dbReference type="ChEBI" id="CHEBI:57856"/>
    </ligand>
</feature>
<feature type="binding site" evidence="2">
    <location>
        <position position="73"/>
    </location>
    <ligand>
        <name>S-adenosyl-L-homocysteine</name>
        <dbReference type="ChEBI" id="CHEBI:57856"/>
    </ligand>
</feature>
<feature type="binding site" evidence="2">
    <location>
        <position position="89"/>
    </location>
    <ligand>
        <name>S-adenosyl-L-homocysteine</name>
        <dbReference type="ChEBI" id="CHEBI:57856"/>
    </ligand>
</feature>
<feature type="binding site" evidence="2">
    <location>
        <position position="115"/>
    </location>
    <ligand>
        <name>S-adenosyl-L-homocysteine</name>
        <dbReference type="ChEBI" id="CHEBI:57856"/>
    </ligand>
</feature>
<feature type="binding site" evidence="2">
    <location>
        <position position="116"/>
    </location>
    <ligand>
        <name>S-adenosyl-L-homocysteine</name>
        <dbReference type="ChEBI" id="CHEBI:57856"/>
    </ligand>
</feature>
<feature type="binding site" evidence="2">
    <location>
        <position position="134"/>
    </location>
    <ligand>
        <name>S-adenosyl-L-homocysteine</name>
        <dbReference type="ChEBI" id="CHEBI:57856"/>
    </ligand>
</feature>
<feature type="binding site" evidence="2">
    <location>
        <position position="167"/>
    </location>
    <ligand>
        <name>phosphocholine</name>
        <dbReference type="ChEBI" id="CHEBI:295975"/>
    </ligand>
</feature>
<feature type="binding site" evidence="2">
    <location>
        <position position="172"/>
    </location>
    <ligand>
        <name>phosphocholine</name>
        <dbReference type="ChEBI" id="CHEBI:295975"/>
    </ligand>
</feature>
<feature type="binding site" evidence="2">
    <location>
        <position position="173"/>
    </location>
    <ligand>
        <name>phosphocholine</name>
        <dbReference type="ChEBI" id="CHEBI:295975"/>
    </ligand>
</feature>
<feature type="binding site" evidence="2">
    <location>
        <position position="177"/>
    </location>
    <ligand>
        <name>phosphocholine</name>
        <dbReference type="ChEBI" id="CHEBI:295975"/>
    </ligand>
</feature>
<feature type="binding site" evidence="2">
    <location>
        <position position="184"/>
    </location>
    <ligand>
        <name>phosphocholine</name>
        <dbReference type="ChEBI" id="CHEBI:295975"/>
    </ligand>
</feature>
<feature type="binding site" evidence="1">
    <location>
        <begin position="253"/>
        <end position="254"/>
    </location>
    <ligand>
        <name>N-methylethanolamine phosphate</name>
        <dbReference type="ChEBI" id="CHEBI:57781"/>
    </ligand>
</feature>
<feature type="binding site" evidence="1">
    <location>
        <position position="262"/>
    </location>
    <ligand>
        <name>N-methylethanolamine phosphate</name>
        <dbReference type="ChEBI" id="CHEBI:57781"/>
    </ligand>
</feature>
<feature type="binding site" evidence="2">
    <location>
        <position position="262"/>
    </location>
    <ligand>
        <name>phosphocholine</name>
        <dbReference type="ChEBI" id="CHEBI:295975"/>
    </ligand>
</feature>
<feature type="binding site" evidence="2">
    <location>
        <position position="271"/>
    </location>
    <ligand>
        <name>S-adenosyl-L-homocysteine</name>
        <dbReference type="ChEBI" id="CHEBI:57856"/>
    </ligand>
</feature>
<feature type="binding site" evidence="2">
    <location>
        <position position="272"/>
    </location>
    <ligand>
        <name>S-adenosyl-L-homocysteine</name>
        <dbReference type="ChEBI" id="CHEBI:57856"/>
    </ligand>
</feature>
<feature type="binding site" evidence="2">
    <location>
        <position position="298"/>
    </location>
    <ligand>
        <name>S-adenosyl-L-homocysteine</name>
        <dbReference type="ChEBI" id="CHEBI:57856"/>
    </ligand>
</feature>
<feature type="binding site" evidence="2">
    <location>
        <position position="320"/>
    </location>
    <ligand>
        <name>S-adenosyl-L-homocysteine</name>
        <dbReference type="ChEBI" id="CHEBI:57856"/>
    </ligand>
</feature>
<feature type="binding site" evidence="2">
    <location>
        <position position="346"/>
    </location>
    <ligand>
        <name>S-adenosyl-L-homocysteine</name>
        <dbReference type="ChEBI" id="CHEBI:57856"/>
    </ligand>
</feature>
<feature type="binding site" evidence="2">
    <location>
        <position position="347"/>
    </location>
    <ligand>
        <name>S-adenosyl-L-homocysteine</name>
        <dbReference type="ChEBI" id="CHEBI:57856"/>
    </ligand>
</feature>
<feature type="binding site" evidence="1">
    <location>
        <position position="363"/>
    </location>
    <ligand>
        <name>S-adenosyl-L-homocysteine</name>
        <dbReference type="ChEBI" id="CHEBI:57856"/>
    </ligand>
</feature>
<feature type="binding site" evidence="1">
    <location>
        <position position="394"/>
    </location>
    <ligand>
        <name>N-methylethanolamine phosphate</name>
        <dbReference type="ChEBI" id="CHEBI:57781"/>
    </ligand>
</feature>
<feature type="binding site" evidence="2">
    <location>
        <position position="394"/>
    </location>
    <ligand>
        <name>phosphocholine</name>
        <dbReference type="ChEBI" id="CHEBI:295975"/>
    </ligand>
</feature>
<feature type="binding site" evidence="1">
    <location>
        <position position="408"/>
    </location>
    <ligand>
        <name>N-methylethanolamine phosphate</name>
        <dbReference type="ChEBI" id="CHEBI:57781"/>
    </ligand>
</feature>
<feature type="binding site" evidence="2">
    <location>
        <position position="408"/>
    </location>
    <ligand>
        <name>phosphocholine</name>
        <dbReference type="ChEBI" id="CHEBI:295975"/>
    </ligand>
</feature>
<feature type="binding site" evidence="1">
    <location>
        <begin position="412"/>
        <end position="414"/>
    </location>
    <ligand>
        <name>N-methylethanolamine phosphate</name>
        <dbReference type="ChEBI" id="CHEBI:57781"/>
    </ligand>
</feature>
<feature type="binding site" evidence="2">
    <location>
        <position position="412"/>
    </location>
    <ligand>
        <name>phosphocholine</name>
        <dbReference type="ChEBI" id="CHEBI:295975"/>
    </ligand>
</feature>
<feature type="binding site" evidence="2">
    <location>
        <position position="414"/>
    </location>
    <ligand>
        <name>phosphocholine</name>
        <dbReference type="ChEBI" id="CHEBI:295975"/>
    </ligand>
</feature>
<feature type="binding site" evidence="1">
    <location>
        <position position="480"/>
    </location>
    <ligand>
        <name>N-methylethanolamine phosphate</name>
        <dbReference type="ChEBI" id="CHEBI:57781"/>
    </ligand>
</feature>
<feature type="binding site" evidence="2">
    <location>
        <position position="480"/>
    </location>
    <ligand>
        <name>phosphocholine</name>
        <dbReference type="ChEBI" id="CHEBI:295975"/>
    </ligand>
</feature>
<feature type="mutagenesis site" description="Abolishes catalytic activity." evidence="4">
    <original>G</original>
    <variation>D</variation>
    <location>
        <position position="68"/>
    </location>
</feature>
<feature type="mutagenesis site" description="No effect on catalytic activity." evidence="4">
    <original>G</original>
    <variation>D</variation>
    <location>
        <position position="298"/>
    </location>
</feature>
<proteinExistence type="evidence at protein level"/>
<name>PEAM1_WHEAT</name>
<reference key="1">
    <citation type="journal article" date="2002" name="Plant Physiol.">
        <title>Molecular and biochemical characterization of a cold-regulated phosphoethanolamine N-methyltransferase from wheat.</title>
        <authorList>
            <person name="Charron J.B."/>
            <person name="Breton G."/>
            <person name="Danyluk J."/>
            <person name="Muzac I."/>
            <person name="Ibrahim R.K."/>
            <person name="Sarhan F."/>
        </authorList>
    </citation>
    <scope>NUCLEOTIDE SEQUENCE [MRNA]</scope>
    <scope>FUNCTION</scope>
    <scope>CATALYTIC ACTIVITY</scope>
    <scope>BIOPHYSICOCHEMICAL PROPERTIES</scope>
    <scope>INDUCTION</scope>
    <scope>MUTAGENESIS OF GLY-68 AND GLY-298</scope>
</reference>
<reference key="2">
    <citation type="journal article" date="2018" name="Science">
        <title>Shifting the limits in wheat research and breeding using a fully annotated reference genome.</title>
        <authorList>
            <consortium name="International wheat genome sequencing consortium (IWGSC)"/>
        </authorList>
    </citation>
    <scope>NUCLEOTIDE SEQUENCE [LARGE SCALE GENOMIC DNA]</scope>
    <source>
        <strain>cv. Chinese Spring</strain>
    </source>
</reference>
<reference key="3">
    <citation type="journal article" date="2009" name="J. Biol. Chem.">
        <title>Biochemical characterization of two wheat phosphoethanolamine N-methyltransferase isoforms with different sensitivities to inhibition by phosphatidic acid.</title>
        <authorList>
            <person name="Jost R."/>
            <person name="Berkowitz O."/>
            <person name="Shaw J."/>
            <person name="Masle J."/>
        </authorList>
    </citation>
    <scope>FUNCTION</scope>
    <scope>CATALYTIC ACTIVITY</scope>
    <scope>ACTIVITY REGULATION</scope>
    <scope>BIOPHYSICOCHEMICAL PROPERTIES</scope>
</reference>
<keyword id="KW-0489">Methyltransferase</keyword>
<keyword id="KW-1185">Reference proteome</keyword>
<keyword id="KW-0808">Transferase</keyword>
<dbReference type="EC" id="2.1.1.103" evidence="4 5"/>
<dbReference type="EMBL" id="AY065971">
    <property type="protein sequence ID" value="AAL40895.1"/>
    <property type="molecule type" value="mRNA"/>
</dbReference>
<dbReference type="SMR" id="Q8VYX1"/>
<dbReference type="STRING" id="4565.Q8VYX1"/>
<dbReference type="EnsemblPlants" id="TraesARI1D03G00558610.2">
    <property type="protein sequence ID" value="TraesARI1D03G00558610.2"/>
    <property type="gene ID" value="TraesARI1D03G00558610"/>
</dbReference>
<dbReference type="EnsemblPlants" id="TraesCAD_scaffold_038367_01G000300.1">
    <property type="protein sequence ID" value="TraesCAD_scaffold_038367_01G000300.1"/>
    <property type="gene ID" value="TraesCAD_scaffold_038367_01G000300"/>
</dbReference>
<dbReference type="EnsemblPlants" id="TraesCLE_scaffold_036226_01G000100.1">
    <property type="protein sequence ID" value="TraesCLE_scaffold_036226_01G000100.1"/>
    <property type="gene ID" value="TraesCLE_scaffold_036226_01G000100"/>
</dbReference>
<dbReference type="EnsemblPlants" id="TraesCS1D02G375700.1">
    <property type="protein sequence ID" value="TraesCS1D02G375700.1"/>
    <property type="gene ID" value="TraesCS1D02G375700"/>
</dbReference>
<dbReference type="EnsemblPlants" id="TraesCS1D03G0874600.1">
    <property type="protein sequence ID" value="TraesCS1D03G0874600.1.CDS"/>
    <property type="gene ID" value="TraesCS1D03G0874600"/>
</dbReference>
<dbReference type="EnsemblPlants" id="TraesJAG1D03G00551610.2">
    <property type="protein sequence ID" value="TraesJAG1D03G00551610.2"/>
    <property type="gene ID" value="TraesJAG1D03G00551610"/>
</dbReference>
<dbReference type="EnsemblPlants" id="TraesJUL1D03G00555220.2">
    <property type="protein sequence ID" value="TraesJUL1D03G00555220.2"/>
    <property type="gene ID" value="TraesJUL1D03G00555220"/>
</dbReference>
<dbReference type="EnsemblPlants" id="TraesKAR1D01G0326800.4">
    <property type="protein sequence ID" value="cds.TraesKAR1D01G0326800.4"/>
    <property type="gene ID" value="TraesKAR1D01G0326800"/>
</dbReference>
<dbReference type="EnsemblPlants" id="TraesLAC1D03G00556100.2">
    <property type="protein sequence ID" value="TraesLAC1D03G00556100.2"/>
    <property type="gene ID" value="TraesLAC1D03G00556100"/>
</dbReference>
<dbReference type="EnsemblPlants" id="TraesLDM1D03G00554660.2">
    <property type="protein sequence ID" value="TraesLDM1D03G00554660.2"/>
    <property type="gene ID" value="TraesLDM1D03G00554660"/>
</dbReference>
<dbReference type="EnsemblPlants" id="TraesMAC1D03G00551750.2">
    <property type="protein sequence ID" value="TraesMAC1D03G00551750.2"/>
    <property type="gene ID" value="TraesMAC1D03G00551750"/>
</dbReference>
<dbReference type="EnsemblPlants" id="TraesNOR1D03G00560410.2">
    <property type="protein sequence ID" value="TraesNOR1D03G00560410.2"/>
    <property type="gene ID" value="TraesNOR1D03G00560410"/>
</dbReference>
<dbReference type="EnsemblPlants" id="TraesPARA_EIv1.0_0312790.1">
    <property type="protein sequence ID" value="TraesPARA_EIv1.0_0312790.1.CDS"/>
    <property type="gene ID" value="TraesPARA_EIv1.0_0312790"/>
</dbReference>
<dbReference type="EnsemblPlants" id="TraesROB_scaffold_090731_01G000300.1">
    <property type="protein sequence ID" value="TraesROB_scaffold_090731_01G000300.1"/>
    <property type="gene ID" value="TraesROB_scaffold_090731_01G000300"/>
</dbReference>
<dbReference type="EnsemblPlants" id="TraesSTA1D03G00550870.2">
    <property type="protein sequence ID" value="TraesSTA1D03G00550870.2"/>
    <property type="gene ID" value="TraesSTA1D03G00550870"/>
</dbReference>
<dbReference type="EnsemblPlants" id="TraesSYM1D03G00559350.2">
    <property type="protein sequence ID" value="TraesSYM1D03G00559350.2"/>
    <property type="gene ID" value="TraesSYM1D03G00559350"/>
</dbReference>
<dbReference type="EnsemblPlants" id="TraesWEE_scaffold_019469_01G000100.1">
    <property type="protein sequence ID" value="TraesWEE_scaffold_019469_01G000100.1"/>
    <property type="gene ID" value="TraesWEE_scaffold_019469_01G000100"/>
</dbReference>
<dbReference type="Gramene" id="TraesARI1D03G00558610.2">
    <property type="protein sequence ID" value="TraesARI1D03G00558610.2"/>
    <property type="gene ID" value="TraesARI1D03G00558610"/>
</dbReference>
<dbReference type="Gramene" id="TraesCAD_scaffold_038367_01G000300.1">
    <property type="protein sequence ID" value="TraesCAD_scaffold_038367_01G000300.1"/>
    <property type="gene ID" value="TraesCAD_scaffold_038367_01G000300"/>
</dbReference>
<dbReference type="Gramene" id="TraesCLE_scaffold_036226_01G000100.1">
    <property type="protein sequence ID" value="TraesCLE_scaffold_036226_01G000100.1"/>
    <property type="gene ID" value="TraesCLE_scaffold_036226_01G000100"/>
</dbReference>
<dbReference type="Gramene" id="TraesCS1D02G375700.1">
    <property type="protein sequence ID" value="TraesCS1D02G375700.1"/>
    <property type="gene ID" value="TraesCS1D02G375700"/>
</dbReference>
<dbReference type="Gramene" id="TraesCS1D03G0874600.1">
    <property type="protein sequence ID" value="TraesCS1D03G0874600.1.CDS"/>
    <property type="gene ID" value="TraesCS1D03G0874600"/>
</dbReference>
<dbReference type="Gramene" id="TraesJAG1D03G00551610.2">
    <property type="protein sequence ID" value="TraesJAG1D03G00551610.2"/>
    <property type="gene ID" value="TraesJAG1D03G00551610"/>
</dbReference>
<dbReference type="Gramene" id="TraesJUL1D03G00555220.2">
    <property type="protein sequence ID" value="TraesJUL1D03G00555220.2"/>
    <property type="gene ID" value="TraesJUL1D03G00555220"/>
</dbReference>
<dbReference type="Gramene" id="TraesKAR1D01G0326800.4">
    <property type="protein sequence ID" value="cds.TraesKAR1D01G0326800.4"/>
    <property type="gene ID" value="TraesKAR1D01G0326800"/>
</dbReference>
<dbReference type="Gramene" id="TraesLAC1D03G00556100.2">
    <property type="protein sequence ID" value="TraesLAC1D03G00556100.2"/>
    <property type="gene ID" value="TraesLAC1D03G00556100"/>
</dbReference>
<dbReference type="Gramene" id="TraesLDM1D03G00554660.2">
    <property type="protein sequence ID" value="TraesLDM1D03G00554660.2"/>
    <property type="gene ID" value="TraesLDM1D03G00554660"/>
</dbReference>
<dbReference type="Gramene" id="TraesMAC1D03G00551750.2">
    <property type="protein sequence ID" value="TraesMAC1D03G00551750.2"/>
    <property type="gene ID" value="TraesMAC1D03G00551750"/>
</dbReference>
<dbReference type="Gramene" id="TraesNOR1D03G00560410.2">
    <property type="protein sequence ID" value="TraesNOR1D03G00560410.2"/>
    <property type="gene ID" value="TraesNOR1D03G00560410"/>
</dbReference>
<dbReference type="Gramene" id="TraesPARA_EIv1.0_0312790.1">
    <property type="protein sequence ID" value="TraesPARA_EIv1.0_0312790.1.CDS"/>
    <property type="gene ID" value="TraesPARA_EIv1.0_0312790"/>
</dbReference>
<dbReference type="Gramene" id="TraesROB_scaffold_090731_01G000300.1">
    <property type="protein sequence ID" value="TraesROB_scaffold_090731_01G000300.1"/>
    <property type="gene ID" value="TraesROB_scaffold_090731_01G000300"/>
</dbReference>
<dbReference type="Gramene" id="TraesSTA1D03G00550870.2">
    <property type="protein sequence ID" value="TraesSTA1D03G00550870.2"/>
    <property type="gene ID" value="TraesSTA1D03G00550870"/>
</dbReference>
<dbReference type="Gramene" id="TraesSYM1D03G00559350.2">
    <property type="protein sequence ID" value="TraesSYM1D03G00559350.2"/>
    <property type="gene ID" value="TraesSYM1D03G00559350"/>
</dbReference>
<dbReference type="Gramene" id="TraesWEE_scaffold_019469_01G000100.1">
    <property type="protein sequence ID" value="TraesWEE_scaffold_019469_01G000100.1"/>
    <property type="gene ID" value="TraesWEE_scaffold_019469_01G000100"/>
</dbReference>
<dbReference type="OMA" id="NITFKCA"/>
<dbReference type="BRENDA" id="2.1.1.103">
    <property type="organism ID" value="6500"/>
</dbReference>
<dbReference type="UniPathway" id="UPA00753">
    <property type="reaction ID" value="UER00738"/>
</dbReference>
<dbReference type="Proteomes" id="UP000019116">
    <property type="component" value="Chromosome 1D"/>
</dbReference>
<dbReference type="ExpressionAtlas" id="Q8VYX1">
    <property type="expression patterns" value="baseline and differential"/>
</dbReference>
<dbReference type="GO" id="GO:0008170">
    <property type="term" value="F:N-methyltransferase activity"/>
    <property type="evidence" value="ECO:0000318"/>
    <property type="project" value="GO_Central"/>
</dbReference>
<dbReference type="GO" id="GO:0000234">
    <property type="term" value="F:phosphoethanolamine N-methyltransferase activity"/>
    <property type="evidence" value="ECO:0007669"/>
    <property type="project" value="InterPro"/>
</dbReference>
<dbReference type="GO" id="GO:0032259">
    <property type="term" value="P:methylation"/>
    <property type="evidence" value="ECO:0007669"/>
    <property type="project" value="UniProtKB-KW"/>
</dbReference>
<dbReference type="GO" id="GO:0006656">
    <property type="term" value="P:phosphatidylcholine biosynthetic process"/>
    <property type="evidence" value="ECO:0000318"/>
    <property type="project" value="GO_Central"/>
</dbReference>
<dbReference type="CDD" id="cd02440">
    <property type="entry name" value="AdoMet_MTases"/>
    <property type="match status" value="2"/>
</dbReference>
<dbReference type="Gene3D" id="3.40.50.150">
    <property type="entry name" value="Vaccinia Virus protein VP39"/>
    <property type="match status" value="2"/>
</dbReference>
<dbReference type="InterPro" id="IPR025714">
    <property type="entry name" value="Methyltranfer_dom"/>
</dbReference>
<dbReference type="InterPro" id="IPR041698">
    <property type="entry name" value="Methyltransf_25"/>
</dbReference>
<dbReference type="InterPro" id="IPR025771">
    <property type="entry name" value="Phosphoethanolamine_N-MeTrfase"/>
</dbReference>
<dbReference type="InterPro" id="IPR029063">
    <property type="entry name" value="SAM-dependent_MTases_sf"/>
</dbReference>
<dbReference type="PANTHER" id="PTHR44307">
    <property type="entry name" value="PHOSPHOETHANOLAMINE METHYLTRANSFERASE"/>
    <property type="match status" value="1"/>
</dbReference>
<dbReference type="PANTHER" id="PTHR44307:SF14">
    <property type="entry name" value="PHOSPHOETHANOLAMINE N-METHYLTRANSFERASE 1"/>
    <property type="match status" value="1"/>
</dbReference>
<dbReference type="Pfam" id="PF13649">
    <property type="entry name" value="Methyltransf_25"/>
    <property type="match status" value="1"/>
</dbReference>
<dbReference type="Pfam" id="PF13847">
    <property type="entry name" value="Methyltransf_31"/>
    <property type="match status" value="1"/>
</dbReference>
<dbReference type="SUPFAM" id="SSF53335">
    <property type="entry name" value="S-adenosyl-L-methionine-dependent methyltransferases"/>
    <property type="match status" value="2"/>
</dbReference>
<dbReference type="PROSITE" id="PS51582">
    <property type="entry name" value="SAM_PEAMT"/>
    <property type="match status" value="1"/>
</dbReference>
<protein>
    <recommendedName>
        <fullName evidence="7">Phosphoethanolamine N-methyltransferase 1</fullName>
        <shortName evidence="7">TaPEAMT1</shortName>
        <ecNumber evidence="4 5">2.1.1.103</ecNumber>
    </recommendedName>
    <alternativeName>
        <fullName evidence="6">Phosphoethanolamine N-methyltransferase</fullName>
        <shortName evidence="6">WPEAMT</shortName>
    </alternativeName>
</protein>
<gene>
    <name evidence="7" type="primary">PEAMT1</name>
</gene>
<comment type="function">
    <text evidence="4 5">Involved in phosphocholine biosynthesis (PubMed:12011366, PubMed:19762471). Catalyzes the N-methylation of phosphoethanolamine, phosphomonomethylethanolamine and phosphodimethylethanolamine, the three methylation steps required to convert phosphoethanolamine to phosphocholine (PC) (PubMed:12011366, PubMed:19762471).</text>
</comment>
<comment type="catalytic activity">
    <reaction evidence="4 5">
        <text>phosphoethanolamine + S-adenosyl-L-methionine = N-methylethanolamine phosphate + S-adenosyl-L-homocysteine + H(+)</text>
        <dbReference type="Rhea" id="RHEA:20365"/>
        <dbReference type="ChEBI" id="CHEBI:15378"/>
        <dbReference type="ChEBI" id="CHEBI:57781"/>
        <dbReference type="ChEBI" id="CHEBI:57856"/>
        <dbReference type="ChEBI" id="CHEBI:58190"/>
        <dbReference type="ChEBI" id="CHEBI:59789"/>
        <dbReference type="EC" id="2.1.1.103"/>
    </reaction>
    <physiologicalReaction direction="left-to-right" evidence="4 5">
        <dbReference type="Rhea" id="RHEA:20366"/>
    </physiologicalReaction>
</comment>
<comment type="catalytic activity">
    <reaction evidence="4 5">
        <text>N-methylethanolamine phosphate + S-adenosyl-L-methionine = N,N-dimethylethanolamine phosphate + S-adenosyl-L-homocysteine + H(+)</text>
        <dbReference type="Rhea" id="RHEA:25321"/>
        <dbReference type="ChEBI" id="CHEBI:15378"/>
        <dbReference type="ChEBI" id="CHEBI:57781"/>
        <dbReference type="ChEBI" id="CHEBI:57856"/>
        <dbReference type="ChEBI" id="CHEBI:58641"/>
        <dbReference type="ChEBI" id="CHEBI:59789"/>
        <dbReference type="EC" id="2.1.1.103"/>
    </reaction>
    <physiologicalReaction direction="left-to-right" evidence="4 5">
        <dbReference type="Rhea" id="RHEA:25322"/>
    </physiologicalReaction>
</comment>
<comment type="catalytic activity">
    <reaction evidence="4 5">
        <text>N,N-dimethylethanolamine phosphate + S-adenosyl-L-methionine = phosphocholine + S-adenosyl-L-homocysteine + H(+)</text>
        <dbReference type="Rhea" id="RHEA:25325"/>
        <dbReference type="ChEBI" id="CHEBI:15378"/>
        <dbReference type="ChEBI" id="CHEBI:57856"/>
        <dbReference type="ChEBI" id="CHEBI:58641"/>
        <dbReference type="ChEBI" id="CHEBI:59789"/>
        <dbReference type="ChEBI" id="CHEBI:295975"/>
        <dbReference type="EC" id="2.1.1.103"/>
    </reaction>
    <physiologicalReaction direction="left-to-right" evidence="4 5">
        <dbReference type="Rhea" id="RHEA:25326"/>
    </physiologicalReaction>
</comment>
<comment type="activity regulation">
    <text evidence="5">Inhibited by phosphatidic acid.</text>
</comment>
<comment type="biophysicochemical properties">
    <kinetics>
        <KM evidence="4">65 uM for phosphoethanolamine</KM>
        <KM evidence="5">390 uM for phosphoethanolamine</KM>
        <KM evidence="4">56 uM for S-adenosyl-L-methionine</KM>
        <KM evidence="5">601 uM for S-adenosyl-L-methionine</KM>
        <Vmax evidence="5">552.0 nmol/min/mg enzyme with phosphoethanolamine as substrate</Vmax>
    </kinetics>
</comment>
<comment type="pathway">
    <text evidence="8">Phospholipid metabolism; phosphatidylcholine biosynthesis; phosphocholine from phosphoethanolamine: step 1/1.</text>
</comment>
<comment type="induction">
    <text evidence="4">Induction by cold stress, salt stress and abscisic acid (ABA).</text>
</comment>
<comment type="similarity">
    <text evidence="3">Belongs to the class I-like SAM-binding methyltransferase superfamily. PEAMT family.</text>
</comment>
<organism>
    <name type="scientific">Triticum aestivum</name>
    <name type="common">Wheat</name>
    <dbReference type="NCBI Taxonomy" id="4565"/>
    <lineage>
        <taxon>Eukaryota</taxon>
        <taxon>Viridiplantae</taxon>
        <taxon>Streptophyta</taxon>
        <taxon>Embryophyta</taxon>
        <taxon>Tracheophyta</taxon>
        <taxon>Spermatophyta</taxon>
        <taxon>Magnoliopsida</taxon>
        <taxon>Liliopsida</taxon>
        <taxon>Poales</taxon>
        <taxon>Poaceae</taxon>
        <taxon>BOP clade</taxon>
        <taxon>Pooideae</taxon>
        <taxon>Triticodae</taxon>
        <taxon>Triticeae</taxon>
        <taxon>Triticinae</taxon>
        <taxon>Triticum</taxon>
    </lineage>
</organism>
<sequence>MDTITVVENVFGEVERKVQKSYWEEHSKDLTVESMMLDSRAKDLDKEERPEVLAILPSYAGKTVLELGAGIGRFTGELAKEAGHVIALDFIDSVIKKNEEINGDIYKNITFMCADVTSPELKIEDNSVDIVFSNWLLMYLNDEEVEKLIGRIVKWLKPGGHIFIRESCFHQSGDSKRKVNPTHYREPRFYTKVFKECHSYDQEGNSFELSLVTSKCIGAYVKSKKNQNQICWLWEKVKCTEDKGFQRFLDNVQYKSTGILRYERVFGEGYVSTGGFETTKEFVDKLDLKAGQKVLDVGCGIGGGDFYMAETYDVHVLGIDLSINMVSFAIERAIGRSCSVEFEVADCTTKEYAENTFDVIYSRDTILHIQDKPALFRNFFKWLKPGGKVLISDYCRSPGTPSEEFAAYIKQRGYDLHDVKTYGKMLEDAGFHDVVAEDRTDQFLRVLERELGETEKNKEAFLADFTQEDYDDIVNGWSAKLKRSSAGEQKWGLFIATK</sequence>